<proteinExistence type="evidence at protein level"/>
<name>NPD_MYCTU</name>
<protein>
    <recommendedName>
        <fullName evidence="2">NAD-dependent protein deacylase</fullName>
        <ecNumber evidence="2 3 4">2.3.1.286</ecNumber>
    </recommendedName>
    <alternativeName>
        <fullName evidence="2 9">Regulatory protein SIR2 homolog</fullName>
    </alternativeName>
</protein>
<feature type="chain" id="PRO_0000110331" description="NAD-dependent protein deacylase">
    <location>
        <begin position="1"/>
        <end position="237"/>
    </location>
</feature>
<feature type="domain" description="Deacetylase sirtuin-type" evidence="3">
    <location>
        <begin position="1"/>
        <end position="235"/>
    </location>
</feature>
<feature type="active site" description="Proton acceptor" evidence="3">
    <location>
        <position position="104"/>
    </location>
</feature>
<feature type="binding site" evidence="2">
    <location>
        <begin position="8"/>
        <end position="28"/>
    </location>
    <ligand>
        <name>NAD(+)</name>
        <dbReference type="ChEBI" id="CHEBI:57540"/>
    </ligand>
</feature>
<feature type="binding site" evidence="2">
    <location>
        <position position="53"/>
    </location>
    <ligand>
        <name>substrate</name>
    </ligand>
</feature>
<feature type="binding site" evidence="2">
    <location>
        <position position="56"/>
    </location>
    <ligand>
        <name>substrate</name>
    </ligand>
</feature>
<feature type="binding site" evidence="2">
    <location>
        <begin position="86"/>
        <end position="89"/>
    </location>
    <ligand>
        <name>NAD(+)</name>
        <dbReference type="ChEBI" id="CHEBI:57540"/>
    </ligand>
</feature>
<feature type="binding site" evidence="2">
    <location>
        <position position="112"/>
    </location>
    <ligand>
        <name>Zn(2+)</name>
        <dbReference type="ChEBI" id="CHEBI:29105"/>
    </ligand>
</feature>
<feature type="binding site" evidence="2">
    <location>
        <position position="115"/>
    </location>
    <ligand>
        <name>Zn(2+)</name>
        <dbReference type="ChEBI" id="CHEBI:29105"/>
    </ligand>
</feature>
<feature type="binding site" evidence="2">
    <location>
        <position position="138"/>
    </location>
    <ligand>
        <name>Zn(2+)</name>
        <dbReference type="ChEBI" id="CHEBI:29105"/>
    </ligand>
</feature>
<feature type="binding site" evidence="2">
    <location>
        <position position="140"/>
    </location>
    <ligand>
        <name>Zn(2+)</name>
        <dbReference type="ChEBI" id="CHEBI:29105"/>
    </ligand>
</feature>
<feature type="binding site" evidence="2">
    <location>
        <begin position="177"/>
        <end position="179"/>
    </location>
    <ligand>
        <name>NAD(+)</name>
        <dbReference type="ChEBI" id="CHEBI:57540"/>
    </ligand>
</feature>
<feature type="binding site" evidence="2">
    <location>
        <begin position="203"/>
        <end position="205"/>
    </location>
    <ligand>
        <name>NAD(+)</name>
        <dbReference type="ChEBI" id="CHEBI:57540"/>
    </ligand>
</feature>
<feature type="binding site" evidence="2">
    <location>
        <position position="221"/>
    </location>
    <ligand>
        <name>NAD(+)</name>
        <dbReference type="ChEBI" id="CHEBI:57540"/>
    </ligand>
</feature>
<keyword id="KW-0013">ADP-ribosylation</keyword>
<keyword id="KW-0963">Cytoplasm</keyword>
<keyword id="KW-0227">DNA damage</keyword>
<keyword id="KW-0234">DNA repair</keyword>
<keyword id="KW-0479">Metal-binding</keyword>
<keyword id="KW-0520">NAD</keyword>
<keyword id="KW-1185">Reference proteome</keyword>
<keyword id="KW-0808">Transferase</keyword>
<keyword id="KW-0862">Zinc</keyword>
<evidence type="ECO:0000250" key="1">
    <source>
        <dbReference type="UniProtKB" id="A5U1J9"/>
    </source>
</evidence>
<evidence type="ECO:0000255" key="2">
    <source>
        <dbReference type="HAMAP-Rule" id="MF_01121"/>
    </source>
</evidence>
<evidence type="ECO:0000255" key="3">
    <source>
        <dbReference type="PROSITE-ProRule" id="PRU00236"/>
    </source>
</evidence>
<evidence type="ECO:0000269" key="4">
    <source>
    </source>
</evidence>
<evidence type="ECO:0000269" key="5">
    <source>
    </source>
</evidence>
<evidence type="ECO:0000269" key="6">
    <source>
    </source>
</evidence>
<evidence type="ECO:0000269" key="7">
    <source>
    </source>
</evidence>
<evidence type="ECO:0000269" key="8">
    <source>
    </source>
</evidence>
<evidence type="ECO:0000303" key="9">
    <source>
    </source>
</evidence>
<evidence type="ECO:0000305" key="10">
    <source>
    </source>
</evidence>
<accession>P9WGG3</accession>
<accession>L0T5V4</accession>
<accession>O06549</accession>
<accession>P66813</accession>
<accession>Q7U0J1</accession>
<organism>
    <name type="scientific">Mycobacterium tuberculosis (strain ATCC 25618 / H37Rv)</name>
    <dbReference type="NCBI Taxonomy" id="83332"/>
    <lineage>
        <taxon>Bacteria</taxon>
        <taxon>Bacillati</taxon>
        <taxon>Actinomycetota</taxon>
        <taxon>Actinomycetes</taxon>
        <taxon>Mycobacteriales</taxon>
        <taxon>Mycobacteriaceae</taxon>
        <taxon>Mycobacterium</taxon>
        <taxon>Mycobacterium tuberculosis complex</taxon>
    </lineage>
</organism>
<comment type="function">
    <text evidence="2">NAD-dependent lysine deacetylase and desuccinylase that specifically removes acetyl and succinyl groups on target proteins. Modulates the activities of several proteins which are inactive in their acylated form.</text>
</comment>
<comment type="function">
    <text evidence="4 5 7 8">Reactivates acetylated acetyl-CoA synthetase (ACS) through an NAD-dependent deacetylation (PubMed:21627103, PubMed:21896569). Is able to auto-ADP-ribosylate (PubMed:19747094). Deacetylates acetylated HupB (PubMed:29345920).</text>
</comment>
<comment type="function">
    <text evidence="1">Probably desuccinylates succinylated HupB.</text>
</comment>
<comment type="function">
    <text evidence="10">Involved in non-homologous end joining (NHEJ) repair of blunt, 5' overhang and 3' overhang DNA double strand breaks (DSB).</text>
</comment>
<comment type="catalytic activity">
    <reaction evidence="2 4 8">
        <text>N(6)-acetyl-L-lysyl-[protein] + NAD(+) + H2O = 2''-O-acetyl-ADP-D-ribose + nicotinamide + L-lysyl-[protein]</text>
        <dbReference type="Rhea" id="RHEA:43636"/>
        <dbReference type="Rhea" id="RHEA-COMP:9752"/>
        <dbReference type="Rhea" id="RHEA-COMP:10731"/>
        <dbReference type="ChEBI" id="CHEBI:15377"/>
        <dbReference type="ChEBI" id="CHEBI:17154"/>
        <dbReference type="ChEBI" id="CHEBI:29969"/>
        <dbReference type="ChEBI" id="CHEBI:57540"/>
        <dbReference type="ChEBI" id="CHEBI:61930"/>
        <dbReference type="ChEBI" id="CHEBI:83767"/>
        <dbReference type="EC" id="2.3.1.286"/>
    </reaction>
</comment>
<comment type="catalytic activity">
    <reaction evidence="2 4">
        <text>N(6)-succinyl-L-lysyl-[protein] + NAD(+) + H2O = 2''-O-succinyl-ADP-D-ribose + nicotinamide + L-lysyl-[protein]</text>
        <dbReference type="Rhea" id="RHEA:47668"/>
        <dbReference type="Rhea" id="RHEA-COMP:9752"/>
        <dbReference type="Rhea" id="RHEA-COMP:11877"/>
        <dbReference type="ChEBI" id="CHEBI:15377"/>
        <dbReference type="ChEBI" id="CHEBI:17154"/>
        <dbReference type="ChEBI" id="CHEBI:29969"/>
        <dbReference type="ChEBI" id="CHEBI:57540"/>
        <dbReference type="ChEBI" id="CHEBI:87830"/>
        <dbReference type="ChEBI" id="CHEBI:87832"/>
    </reaction>
</comment>
<comment type="cofactor">
    <cofactor evidence="2">
        <name>Zn(2+)</name>
        <dbReference type="ChEBI" id="CHEBI:29105"/>
    </cofactor>
    <text evidence="2">Binds 1 zinc ion per subunit.</text>
</comment>
<comment type="activity regulation">
    <text evidence="4">Inhibited by 2-hydroxy-1-naphthaldehyde and nicotinamide.</text>
</comment>
<comment type="biophysicochemical properties">
    <kinetics>
        <KM evidence="8">4.7 uM for N(6)-acetyl-L-lysyl-[HupB]</KM>
        <text evidence="8">kcat is 1.27 min(-1) with N(6)-acetyl-L-lysyl-[HupB] as substrate.</text>
    </kinetics>
    <phDependence>
        <text evidence="4">Optimum pH is 9.0.</text>
    </phDependence>
    <temperatureDependence>
        <text evidence="4">Optimum temperature is 25 degrees Celsius.</text>
    </temperatureDependence>
</comment>
<comment type="subunit">
    <text evidence="6">Interacts with both Ku and LigD; may form a trimeric complex during NHEJ.</text>
</comment>
<comment type="subcellular location">
    <subcellularLocation>
        <location evidence="2">Cytoplasm</location>
    </subcellularLocation>
</comment>
<comment type="domain">
    <text evidence="2">2 residues (Tyr-53 and Arg-56) present in a large hydrophobic pocket are probably involved in substrate specificity. They are important for desuccinylation activity, but dispensable for deacetylation activity.</text>
</comment>
<comment type="PTM">
    <text>Auto-ADP-ribosylated.</text>
</comment>
<comment type="similarity">
    <text evidence="2">Belongs to the sirtuin family. Class III subfamily.</text>
</comment>
<reference key="1">
    <citation type="journal article" date="1998" name="Nature">
        <title>Deciphering the biology of Mycobacterium tuberculosis from the complete genome sequence.</title>
        <authorList>
            <person name="Cole S.T."/>
            <person name="Brosch R."/>
            <person name="Parkhill J."/>
            <person name="Garnier T."/>
            <person name="Churcher C.M."/>
            <person name="Harris D.E."/>
            <person name="Gordon S.V."/>
            <person name="Eiglmeier K."/>
            <person name="Gas S."/>
            <person name="Barry C.E. III"/>
            <person name="Tekaia F."/>
            <person name="Badcock K."/>
            <person name="Basham D."/>
            <person name="Brown D."/>
            <person name="Chillingworth T."/>
            <person name="Connor R."/>
            <person name="Davies R.M."/>
            <person name="Devlin K."/>
            <person name="Feltwell T."/>
            <person name="Gentles S."/>
            <person name="Hamlin N."/>
            <person name="Holroyd S."/>
            <person name="Hornsby T."/>
            <person name="Jagels K."/>
            <person name="Krogh A."/>
            <person name="McLean J."/>
            <person name="Moule S."/>
            <person name="Murphy L.D."/>
            <person name="Oliver S."/>
            <person name="Osborne J."/>
            <person name="Quail M.A."/>
            <person name="Rajandream M.A."/>
            <person name="Rogers J."/>
            <person name="Rutter S."/>
            <person name="Seeger K."/>
            <person name="Skelton S."/>
            <person name="Squares S."/>
            <person name="Squares R."/>
            <person name="Sulston J.E."/>
            <person name="Taylor K."/>
            <person name="Whitehead S."/>
            <person name="Barrell B.G."/>
        </authorList>
    </citation>
    <scope>NUCLEOTIDE SEQUENCE [LARGE SCALE GENOMIC DNA]</scope>
    <source>
        <strain>ATCC 25618 / H37Rv</strain>
    </source>
</reference>
<reference key="2">
    <citation type="journal article" date="2009" name="Biochemistry (Mosc.)">
        <title>Cloning and characterization of NAD-dependent protein deacetylase (Rv1151c) from Mycobacterium tuberculosis.</title>
        <authorList>
            <person name="Gu J."/>
            <person name="Deng J.Y."/>
            <person name="Li R."/>
            <person name="Wei H."/>
            <person name="Zhang Z."/>
            <person name="Zhou Y."/>
            <person name="Zhang Y."/>
            <person name="Zhang X.E."/>
        </authorList>
    </citation>
    <scope>BIOPHYSICOCHEMICAL PROPERTIES</scope>
    <scope>ACTIVITY REGULATION</scope>
    <scope>CATALYTIC ACTIVITY</scope>
    <scope>AUTO-ADP-RIBOSYLATION</scope>
    <source>
        <strain>ATCC 25618 / H37Rv</strain>
    </source>
</reference>
<reference key="3">
    <citation type="journal article" date="2011" name="Acta Biochim. Biophys. Sin.">
        <title>Purification and characterization of the acetyl-CoA synthetase from Mycobacterium tuberculosis.</title>
        <authorList>
            <person name="Li R."/>
            <person name="Gu J."/>
            <person name="Chen P."/>
            <person name="Zhang Z."/>
            <person name="Deng J."/>
            <person name="Zhang X."/>
        </authorList>
    </citation>
    <scope>FUNCTION IN THE DEACETYLATION OF ACSA</scope>
</reference>
<reference key="4">
    <citation type="journal article" date="2011" name="Biochemistry">
        <title>Reversible acetylation and inactivation of Mycobacterium tuberculosis acetyl-CoA synthetase is dependent on cAMP.</title>
        <authorList>
            <person name="Xu H."/>
            <person name="Hegde S.S."/>
            <person name="Blanchard J.S."/>
        </authorList>
    </citation>
    <scope>FUNCTION IN THE DEACETYLATION OF ACSA</scope>
</reference>
<reference key="5">
    <citation type="journal article" date="2011" name="Mol. Cell. Proteomics">
        <title>Proteogenomic analysis of Mycobacterium tuberculosis by high resolution mass spectrometry.</title>
        <authorList>
            <person name="Kelkar D.S."/>
            <person name="Kumar D."/>
            <person name="Kumar P."/>
            <person name="Balakrishnan L."/>
            <person name="Muthusamy B."/>
            <person name="Yadav A.K."/>
            <person name="Shrivastava P."/>
            <person name="Marimuthu A."/>
            <person name="Anand S."/>
            <person name="Sundaram H."/>
            <person name="Kingsbury R."/>
            <person name="Harsha H.C."/>
            <person name="Nair B."/>
            <person name="Prasad T.S."/>
            <person name="Chauhan D.S."/>
            <person name="Katoch K."/>
            <person name="Katoch V.M."/>
            <person name="Kumar P."/>
            <person name="Chaerkady R."/>
            <person name="Ramachandran S."/>
            <person name="Dash D."/>
            <person name="Pandey A."/>
        </authorList>
    </citation>
    <scope>IDENTIFICATION BY MASS SPECTROMETRY [LARGE SCALE ANALYSIS]</scope>
    <source>
        <strain>ATCC 25618 / H37Rv</strain>
    </source>
</reference>
<reference key="6">
    <citation type="journal article" date="2011" name="PLoS ONE">
        <title>A Sir2-like protein participates in mycobacterial NHEJ.</title>
        <authorList>
            <person name="Li Z."/>
            <person name="Wen J."/>
            <person name="Lin Y."/>
            <person name="Wang S."/>
            <person name="Xue P."/>
            <person name="Zhang Z."/>
            <person name="Zhou Y."/>
            <person name="Wang X."/>
            <person name="Sui L."/>
            <person name="Bi L.J."/>
            <person name="Zhang X.E."/>
        </authorList>
    </citation>
    <scope>INTERACTION WITH KU AND LIGD</scope>
    <scope>SUBUNIT</scope>
</reference>
<reference key="7">
    <citation type="journal article" date="2018" name="Biochemistry">
        <title>Acetylation by Eis and Deacetylation by Rv1151c of Mycobacterium tuberculosis HupB: Biochemical and Structural Insight.</title>
        <authorList>
            <person name="Green K.D."/>
            <person name="Biswas T."/>
            <person name="Pang A.H."/>
            <person name="Willby M.J."/>
            <person name="Reed M.S."/>
            <person name="Stuchlik O."/>
            <person name="Pohl J."/>
            <person name="Posey J.E."/>
            <person name="Tsodikov O.V."/>
            <person name="Garneau-Tsodikova S."/>
        </authorList>
    </citation>
    <scope>FUNCTION</scope>
    <scope>SUBSTRATE</scope>
    <scope>BIOPHYSICOCHEMICAL PROPERTIES</scope>
    <source>
        <strain>ATCC 25618 / H37Rv</strain>
    </source>
</reference>
<sequence length="237" mass="25661">MRVAVLSGAGISAESGVPTFRDDKNGLWARFDPYELSSTQGWLRNPERVWGWYLWRHYLVANVEPNDGHRAIAAWQDHAEVSVITQNVDDLHERAGSGAVHHLHGSLFEFRCARCGVPYTDALPEMPEPAIEVEPPVCDCGGLIRPDIVWFGEPLPEEPWRSAVEATGSADVMVVVGTSAIVYPAAGLPDLALARGTAVIEVNPEPTPLSGSATISIRESASQALPGLLERLPALLK</sequence>
<dbReference type="EC" id="2.3.1.286" evidence="2 3 4"/>
<dbReference type="EMBL" id="AL123456">
    <property type="protein sequence ID" value="CCP43906.1"/>
    <property type="molecule type" value="Genomic_DNA"/>
</dbReference>
<dbReference type="PIR" id="H70554">
    <property type="entry name" value="H70554"/>
</dbReference>
<dbReference type="RefSeq" id="NP_215667.1">
    <property type="nucleotide sequence ID" value="NC_000962.3"/>
</dbReference>
<dbReference type="RefSeq" id="WP_003406044.1">
    <property type="nucleotide sequence ID" value="NZ_NVQJ01000025.1"/>
</dbReference>
<dbReference type="SMR" id="P9WGG3"/>
<dbReference type="FunCoup" id="P9WGG3">
    <property type="interactions" value="389"/>
</dbReference>
<dbReference type="STRING" id="83332.Rv1151c"/>
<dbReference type="PaxDb" id="83332-Rv1151c"/>
<dbReference type="DNASU" id="886026"/>
<dbReference type="GeneID" id="886026"/>
<dbReference type="KEGG" id="mtu:Rv1151c"/>
<dbReference type="KEGG" id="mtv:RVBD_1151c"/>
<dbReference type="TubercuList" id="Rv1151c"/>
<dbReference type="eggNOG" id="COG0846">
    <property type="taxonomic scope" value="Bacteria"/>
</dbReference>
<dbReference type="InParanoid" id="P9WGG3"/>
<dbReference type="OrthoDB" id="9800582at2"/>
<dbReference type="PhylomeDB" id="P9WGG3"/>
<dbReference type="SABIO-RK" id="P9WGG3"/>
<dbReference type="Proteomes" id="UP000001584">
    <property type="component" value="Chromosome"/>
</dbReference>
<dbReference type="GO" id="GO:0005737">
    <property type="term" value="C:cytoplasm"/>
    <property type="evidence" value="ECO:0007669"/>
    <property type="project" value="UniProtKB-SubCell"/>
</dbReference>
<dbReference type="GO" id="GO:0009274">
    <property type="term" value="C:peptidoglycan-based cell wall"/>
    <property type="evidence" value="ECO:0007005"/>
    <property type="project" value="MTBBASE"/>
</dbReference>
<dbReference type="GO" id="GO:0017136">
    <property type="term" value="F:histone deacetylase activity, NAD-dependent"/>
    <property type="evidence" value="ECO:0000318"/>
    <property type="project" value="GO_Central"/>
</dbReference>
<dbReference type="GO" id="GO:0070403">
    <property type="term" value="F:NAD+ binding"/>
    <property type="evidence" value="ECO:0000318"/>
    <property type="project" value="GO_Central"/>
</dbReference>
<dbReference type="GO" id="GO:0034979">
    <property type="term" value="F:NAD-dependent protein lysine deacetylase activity"/>
    <property type="evidence" value="ECO:0000314"/>
    <property type="project" value="MTBBASE"/>
</dbReference>
<dbReference type="GO" id="GO:0036054">
    <property type="term" value="F:protein-malonyllysine demalonylase activity"/>
    <property type="evidence" value="ECO:0007669"/>
    <property type="project" value="InterPro"/>
</dbReference>
<dbReference type="GO" id="GO:0036055">
    <property type="term" value="F:protein-succinyllysine desuccinylase activity"/>
    <property type="evidence" value="ECO:0007669"/>
    <property type="project" value="UniProtKB-UniRule"/>
</dbReference>
<dbReference type="GO" id="GO:0008270">
    <property type="term" value="F:zinc ion binding"/>
    <property type="evidence" value="ECO:0007669"/>
    <property type="project" value="UniProtKB-UniRule"/>
</dbReference>
<dbReference type="GO" id="GO:0006281">
    <property type="term" value="P:DNA repair"/>
    <property type="evidence" value="ECO:0007669"/>
    <property type="project" value="UniProtKB-KW"/>
</dbReference>
<dbReference type="GO" id="GO:0070213">
    <property type="term" value="P:protein auto-ADP-ribosylation"/>
    <property type="evidence" value="ECO:0000314"/>
    <property type="project" value="MTBBASE"/>
</dbReference>
<dbReference type="GO" id="GO:0006476">
    <property type="term" value="P:protein deacetylation"/>
    <property type="evidence" value="ECO:0000314"/>
    <property type="project" value="CACAO"/>
</dbReference>
<dbReference type="CDD" id="cd01412">
    <property type="entry name" value="SIRT5_Af1_CobB"/>
    <property type="match status" value="1"/>
</dbReference>
<dbReference type="Gene3D" id="3.30.1600.10">
    <property type="entry name" value="SIR2/SIRT2 'Small Domain"/>
    <property type="match status" value="1"/>
</dbReference>
<dbReference type="Gene3D" id="3.40.50.1220">
    <property type="entry name" value="TPP-binding domain"/>
    <property type="match status" value="1"/>
</dbReference>
<dbReference type="HAMAP" id="MF_01121">
    <property type="entry name" value="Sirtuin_ClassIII"/>
    <property type="match status" value="1"/>
</dbReference>
<dbReference type="InterPro" id="IPR029035">
    <property type="entry name" value="DHS-like_NAD/FAD-binding_dom"/>
</dbReference>
<dbReference type="InterPro" id="IPR050134">
    <property type="entry name" value="NAD-dep_sirtuin_deacylases"/>
</dbReference>
<dbReference type="InterPro" id="IPR003000">
    <property type="entry name" value="Sirtuin"/>
</dbReference>
<dbReference type="InterPro" id="IPR026591">
    <property type="entry name" value="Sirtuin_cat_small_dom_sf"/>
</dbReference>
<dbReference type="InterPro" id="IPR027546">
    <property type="entry name" value="Sirtuin_class_III"/>
</dbReference>
<dbReference type="InterPro" id="IPR026590">
    <property type="entry name" value="Ssirtuin_cat_dom"/>
</dbReference>
<dbReference type="NCBIfam" id="NF001753">
    <property type="entry name" value="PRK00481.1-3"/>
    <property type="match status" value="1"/>
</dbReference>
<dbReference type="PANTHER" id="PTHR11085:SF4">
    <property type="entry name" value="NAD-DEPENDENT PROTEIN DEACYLASE"/>
    <property type="match status" value="1"/>
</dbReference>
<dbReference type="PANTHER" id="PTHR11085">
    <property type="entry name" value="NAD-DEPENDENT PROTEIN DEACYLASE SIRTUIN-5, MITOCHONDRIAL-RELATED"/>
    <property type="match status" value="1"/>
</dbReference>
<dbReference type="Pfam" id="PF02146">
    <property type="entry name" value="SIR2"/>
    <property type="match status" value="1"/>
</dbReference>
<dbReference type="SUPFAM" id="SSF52467">
    <property type="entry name" value="DHS-like NAD/FAD-binding domain"/>
    <property type="match status" value="1"/>
</dbReference>
<dbReference type="PROSITE" id="PS50305">
    <property type="entry name" value="SIRTUIN"/>
    <property type="match status" value="1"/>
</dbReference>
<gene>
    <name evidence="2" type="primary">cobB</name>
    <name type="synonym">sir2</name>
    <name type="ordered locus">Rv1151c</name>
    <name type="ORF">MTCI65.18c</name>
</gene>